<name>PFKA_SALA4</name>
<reference key="1">
    <citation type="journal article" date="2011" name="J. Bacteriol.">
        <title>Comparative genomics of 28 Salmonella enterica isolates: evidence for CRISPR-mediated adaptive sublineage evolution.</title>
        <authorList>
            <person name="Fricke W.F."/>
            <person name="Mammel M.K."/>
            <person name="McDermott P.F."/>
            <person name="Tartera C."/>
            <person name="White D.G."/>
            <person name="Leclerc J.E."/>
            <person name="Ravel J."/>
            <person name="Cebula T.A."/>
        </authorList>
    </citation>
    <scope>NUCLEOTIDE SEQUENCE [LARGE SCALE GENOMIC DNA]</scope>
    <source>
        <strain>SL483</strain>
    </source>
</reference>
<gene>
    <name evidence="1" type="primary">pfkA</name>
    <name type="ordered locus">SeAg_B4308</name>
</gene>
<sequence length="320" mass="34915">MIKKIGVLTSGGDAPGMNAAIRGVVRAALTEGLEVMGIYDGYLGLYEDRMVQLDRYSVSDMINRGGTFLGSARFPEFRDENIRAVAIENLKKRGIDALVVIGGDGSYMGAKRLTEMGFPCIGLPGTIDNDIKGTDYTIGYFTALGTVVEAIDRLRDTSSSHQRISIVEVMGRYCGDLTLAAAIAGGCEFIVVPEVEFNREDLVAEIKAGIAKGKKHAIVAITEHMCDVDELAHFIEKETGRETRATVLGHIQRGGSPVPYDRILASRMGAYAIDLLLEGHGGRCVGIQNEQLVHHDIIDAIENMKRPFKSDWMECAKKLY</sequence>
<comment type="function">
    <text evidence="1">Catalyzes the phosphorylation of D-fructose 6-phosphate to fructose 1,6-bisphosphate by ATP, the first committing step of glycolysis.</text>
</comment>
<comment type="catalytic activity">
    <reaction evidence="1">
        <text>beta-D-fructose 6-phosphate + ATP = beta-D-fructose 1,6-bisphosphate + ADP + H(+)</text>
        <dbReference type="Rhea" id="RHEA:16109"/>
        <dbReference type="ChEBI" id="CHEBI:15378"/>
        <dbReference type="ChEBI" id="CHEBI:30616"/>
        <dbReference type="ChEBI" id="CHEBI:32966"/>
        <dbReference type="ChEBI" id="CHEBI:57634"/>
        <dbReference type="ChEBI" id="CHEBI:456216"/>
        <dbReference type="EC" id="2.7.1.11"/>
    </reaction>
</comment>
<comment type="cofactor">
    <cofactor evidence="1">
        <name>Mg(2+)</name>
        <dbReference type="ChEBI" id="CHEBI:18420"/>
    </cofactor>
</comment>
<comment type="activity regulation">
    <text evidence="1">Allosterically activated by ADP and other diphosphonucleosides, and allosterically inhibited by phosphoenolpyruvate.</text>
</comment>
<comment type="pathway">
    <text evidence="1">Carbohydrate degradation; glycolysis; D-glyceraldehyde 3-phosphate and glycerone phosphate from D-glucose: step 3/4.</text>
</comment>
<comment type="subunit">
    <text evidence="1">Homotetramer.</text>
</comment>
<comment type="subcellular location">
    <subcellularLocation>
        <location evidence="1">Cytoplasm</location>
    </subcellularLocation>
</comment>
<comment type="similarity">
    <text evidence="1">Belongs to the phosphofructokinase type A (PFKA) family. ATP-dependent PFK group I subfamily. Prokaryotic clade 'B1' sub-subfamily.</text>
</comment>
<organism>
    <name type="scientific">Salmonella agona (strain SL483)</name>
    <dbReference type="NCBI Taxonomy" id="454166"/>
    <lineage>
        <taxon>Bacteria</taxon>
        <taxon>Pseudomonadati</taxon>
        <taxon>Pseudomonadota</taxon>
        <taxon>Gammaproteobacteria</taxon>
        <taxon>Enterobacterales</taxon>
        <taxon>Enterobacteriaceae</taxon>
        <taxon>Salmonella</taxon>
    </lineage>
</organism>
<protein>
    <recommendedName>
        <fullName evidence="1">ATP-dependent 6-phosphofructokinase</fullName>
        <shortName evidence="1">ATP-PFK</shortName>
        <shortName evidence="1">Phosphofructokinase</shortName>
        <ecNumber evidence="1">2.7.1.11</ecNumber>
    </recommendedName>
    <alternativeName>
        <fullName evidence="1">Phosphohexokinase</fullName>
    </alternativeName>
</protein>
<feature type="chain" id="PRO_1000120050" description="ATP-dependent 6-phosphofructokinase">
    <location>
        <begin position="1"/>
        <end position="320"/>
    </location>
</feature>
<feature type="active site" description="Proton acceptor" evidence="1">
    <location>
        <position position="128"/>
    </location>
</feature>
<feature type="binding site" evidence="1">
    <location>
        <position position="12"/>
    </location>
    <ligand>
        <name>ATP</name>
        <dbReference type="ChEBI" id="CHEBI:30616"/>
    </ligand>
</feature>
<feature type="binding site" evidence="1">
    <location>
        <begin position="22"/>
        <end position="26"/>
    </location>
    <ligand>
        <name>ADP</name>
        <dbReference type="ChEBI" id="CHEBI:456216"/>
        <note>allosteric activator; ligand shared between dimeric partners</note>
    </ligand>
</feature>
<feature type="binding site" evidence="1">
    <location>
        <begin position="55"/>
        <end position="60"/>
    </location>
    <ligand>
        <name>ADP</name>
        <dbReference type="ChEBI" id="CHEBI:456216"/>
        <note>allosteric activator; ligand shared between dimeric partners</note>
    </ligand>
</feature>
<feature type="binding site" evidence="1">
    <location>
        <begin position="73"/>
        <end position="74"/>
    </location>
    <ligand>
        <name>ATP</name>
        <dbReference type="ChEBI" id="CHEBI:30616"/>
    </ligand>
</feature>
<feature type="binding site" evidence="1">
    <location>
        <begin position="103"/>
        <end position="106"/>
    </location>
    <ligand>
        <name>ATP</name>
        <dbReference type="ChEBI" id="CHEBI:30616"/>
    </ligand>
</feature>
<feature type="binding site" evidence="1">
    <location>
        <position position="104"/>
    </location>
    <ligand>
        <name>Mg(2+)</name>
        <dbReference type="ChEBI" id="CHEBI:18420"/>
        <note>catalytic</note>
    </ligand>
</feature>
<feature type="binding site" description="in other chain" evidence="1">
    <location>
        <begin position="126"/>
        <end position="128"/>
    </location>
    <ligand>
        <name>substrate</name>
        <note>ligand shared between dimeric partners</note>
    </ligand>
</feature>
<feature type="binding site" description="in other chain" evidence="1">
    <location>
        <position position="155"/>
    </location>
    <ligand>
        <name>ADP</name>
        <dbReference type="ChEBI" id="CHEBI:456216"/>
        <note>allosteric activator; ligand shared between dimeric partners</note>
    </ligand>
</feature>
<feature type="binding site" evidence="1">
    <location>
        <position position="163"/>
    </location>
    <ligand>
        <name>substrate</name>
        <note>ligand shared between dimeric partners</note>
    </ligand>
</feature>
<feature type="binding site" description="in other chain" evidence="1">
    <location>
        <begin position="170"/>
        <end position="172"/>
    </location>
    <ligand>
        <name>substrate</name>
        <note>ligand shared between dimeric partners</note>
    </ligand>
</feature>
<feature type="binding site" description="in other chain" evidence="1">
    <location>
        <begin position="186"/>
        <end position="188"/>
    </location>
    <ligand>
        <name>ADP</name>
        <dbReference type="ChEBI" id="CHEBI:456216"/>
        <note>allosteric activator; ligand shared between dimeric partners</note>
    </ligand>
</feature>
<feature type="binding site" description="in other chain" evidence="1">
    <location>
        <position position="212"/>
    </location>
    <ligand>
        <name>ADP</name>
        <dbReference type="ChEBI" id="CHEBI:456216"/>
        <note>allosteric activator; ligand shared between dimeric partners</note>
    </ligand>
</feature>
<feature type="binding site" description="in other chain" evidence="1">
    <location>
        <begin position="214"/>
        <end position="216"/>
    </location>
    <ligand>
        <name>ADP</name>
        <dbReference type="ChEBI" id="CHEBI:456216"/>
        <note>allosteric activator; ligand shared between dimeric partners</note>
    </ligand>
</feature>
<feature type="binding site" description="in other chain" evidence="1">
    <location>
        <position position="223"/>
    </location>
    <ligand>
        <name>substrate</name>
        <note>ligand shared between dimeric partners</note>
    </ligand>
</feature>
<feature type="binding site" evidence="1">
    <location>
        <position position="244"/>
    </location>
    <ligand>
        <name>substrate</name>
        <note>ligand shared between dimeric partners</note>
    </ligand>
</feature>
<feature type="binding site" description="in other chain" evidence="1">
    <location>
        <begin position="250"/>
        <end position="253"/>
    </location>
    <ligand>
        <name>substrate</name>
        <note>ligand shared between dimeric partners</note>
    </ligand>
</feature>
<keyword id="KW-0021">Allosteric enzyme</keyword>
<keyword id="KW-0067">ATP-binding</keyword>
<keyword id="KW-0963">Cytoplasm</keyword>
<keyword id="KW-0324">Glycolysis</keyword>
<keyword id="KW-0418">Kinase</keyword>
<keyword id="KW-0460">Magnesium</keyword>
<keyword id="KW-0479">Metal-binding</keyword>
<keyword id="KW-0547">Nucleotide-binding</keyword>
<keyword id="KW-0808">Transferase</keyword>
<accession>B5F0P6</accession>
<dbReference type="EC" id="2.7.1.11" evidence="1"/>
<dbReference type="EMBL" id="CP001138">
    <property type="protein sequence ID" value="ACH50535.1"/>
    <property type="molecule type" value="Genomic_DNA"/>
</dbReference>
<dbReference type="RefSeq" id="WP_000591793.1">
    <property type="nucleotide sequence ID" value="NC_011149.1"/>
</dbReference>
<dbReference type="SMR" id="B5F0P6"/>
<dbReference type="GeneID" id="66758327"/>
<dbReference type="KEGG" id="sea:SeAg_B4308"/>
<dbReference type="HOGENOM" id="CLU_020655_0_1_6"/>
<dbReference type="UniPathway" id="UPA00109">
    <property type="reaction ID" value="UER00182"/>
</dbReference>
<dbReference type="Proteomes" id="UP000008819">
    <property type="component" value="Chromosome"/>
</dbReference>
<dbReference type="GO" id="GO:0005945">
    <property type="term" value="C:6-phosphofructokinase complex"/>
    <property type="evidence" value="ECO:0007669"/>
    <property type="project" value="TreeGrafter"/>
</dbReference>
<dbReference type="GO" id="GO:0003872">
    <property type="term" value="F:6-phosphofructokinase activity"/>
    <property type="evidence" value="ECO:0007669"/>
    <property type="project" value="UniProtKB-UniRule"/>
</dbReference>
<dbReference type="GO" id="GO:0016208">
    <property type="term" value="F:AMP binding"/>
    <property type="evidence" value="ECO:0007669"/>
    <property type="project" value="TreeGrafter"/>
</dbReference>
<dbReference type="GO" id="GO:0005524">
    <property type="term" value="F:ATP binding"/>
    <property type="evidence" value="ECO:0007669"/>
    <property type="project" value="UniProtKB-KW"/>
</dbReference>
<dbReference type="GO" id="GO:0070095">
    <property type="term" value="F:fructose-6-phosphate binding"/>
    <property type="evidence" value="ECO:0007669"/>
    <property type="project" value="TreeGrafter"/>
</dbReference>
<dbReference type="GO" id="GO:0042802">
    <property type="term" value="F:identical protein binding"/>
    <property type="evidence" value="ECO:0007669"/>
    <property type="project" value="TreeGrafter"/>
</dbReference>
<dbReference type="GO" id="GO:0046872">
    <property type="term" value="F:metal ion binding"/>
    <property type="evidence" value="ECO:0007669"/>
    <property type="project" value="UniProtKB-KW"/>
</dbReference>
<dbReference type="GO" id="GO:0048029">
    <property type="term" value="F:monosaccharide binding"/>
    <property type="evidence" value="ECO:0007669"/>
    <property type="project" value="TreeGrafter"/>
</dbReference>
<dbReference type="GO" id="GO:0061621">
    <property type="term" value="P:canonical glycolysis"/>
    <property type="evidence" value="ECO:0007669"/>
    <property type="project" value="TreeGrafter"/>
</dbReference>
<dbReference type="GO" id="GO:0030388">
    <property type="term" value="P:fructose 1,6-bisphosphate metabolic process"/>
    <property type="evidence" value="ECO:0007669"/>
    <property type="project" value="TreeGrafter"/>
</dbReference>
<dbReference type="GO" id="GO:0006002">
    <property type="term" value="P:fructose 6-phosphate metabolic process"/>
    <property type="evidence" value="ECO:0007669"/>
    <property type="project" value="InterPro"/>
</dbReference>
<dbReference type="CDD" id="cd00763">
    <property type="entry name" value="Bacterial_PFK"/>
    <property type="match status" value="1"/>
</dbReference>
<dbReference type="FunFam" id="3.40.50.450:FF:000001">
    <property type="entry name" value="ATP-dependent 6-phosphofructokinase"/>
    <property type="match status" value="1"/>
</dbReference>
<dbReference type="FunFam" id="3.40.50.460:FF:000002">
    <property type="entry name" value="ATP-dependent 6-phosphofructokinase"/>
    <property type="match status" value="1"/>
</dbReference>
<dbReference type="Gene3D" id="3.40.50.450">
    <property type="match status" value="1"/>
</dbReference>
<dbReference type="Gene3D" id="3.40.50.460">
    <property type="entry name" value="Phosphofructokinase domain"/>
    <property type="match status" value="1"/>
</dbReference>
<dbReference type="HAMAP" id="MF_00339">
    <property type="entry name" value="Phosphofructokinase_I_B1"/>
    <property type="match status" value="1"/>
</dbReference>
<dbReference type="InterPro" id="IPR022953">
    <property type="entry name" value="ATP_PFK"/>
</dbReference>
<dbReference type="InterPro" id="IPR012003">
    <property type="entry name" value="ATP_PFK_prok-type"/>
</dbReference>
<dbReference type="InterPro" id="IPR012828">
    <property type="entry name" value="PFKA_ATP_prok"/>
</dbReference>
<dbReference type="InterPro" id="IPR015912">
    <property type="entry name" value="Phosphofructokinase_CS"/>
</dbReference>
<dbReference type="InterPro" id="IPR000023">
    <property type="entry name" value="Phosphofructokinase_dom"/>
</dbReference>
<dbReference type="InterPro" id="IPR035966">
    <property type="entry name" value="PKF_sf"/>
</dbReference>
<dbReference type="NCBIfam" id="TIGR02482">
    <property type="entry name" value="PFKA_ATP"/>
    <property type="match status" value="1"/>
</dbReference>
<dbReference type="NCBIfam" id="NF002872">
    <property type="entry name" value="PRK03202.1"/>
    <property type="match status" value="1"/>
</dbReference>
<dbReference type="PANTHER" id="PTHR13697:SF4">
    <property type="entry name" value="ATP-DEPENDENT 6-PHOSPHOFRUCTOKINASE"/>
    <property type="match status" value="1"/>
</dbReference>
<dbReference type="PANTHER" id="PTHR13697">
    <property type="entry name" value="PHOSPHOFRUCTOKINASE"/>
    <property type="match status" value="1"/>
</dbReference>
<dbReference type="Pfam" id="PF00365">
    <property type="entry name" value="PFK"/>
    <property type="match status" value="1"/>
</dbReference>
<dbReference type="PIRSF" id="PIRSF000532">
    <property type="entry name" value="ATP_PFK_prok"/>
    <property type="match status" value="1"/>
</dbReference>
<dbReference type="PRINTS" id="PR00476">
    <property type="entry name" value="PHFRCTKINASE"/>
</dbReference>
<dbReference type="SUPFAM" id="SSF53784">
    <property type="entry name" value="Phosphofructokinase"/>
    <property type="match status" value="1"/>
</dbReference>
<dbReference type="PROSITE" id="PS00433">
    <property type="entry name" value="PHOSPHOFRUCTOKINASE"/>
    <property type="match status" value="1"/>
</dbReference>
<evidence type="ECO:0000255" key="1">
    <source>
        <dbReference type="HAMAP-Rule" id="MF_00339"/>
    </source>
</evidence>
<proteinExistence type="inferred from homology"/>